<proteinExistence type="evidence at transcript level"/>
<dbReference type="EMBL" id="AB084139">
    <property type="protein sequence ID" value="BAC22063.1"/>
    <property type="molecule type" value="mRNA"/>
</dbReference>
<dbReference type="RefSeq" id="NP_001009849.1">
    <property type="nucleotide sequence ID" value="NM_001009849.1"/>
</dbReference>
<dbReference type="SMR" id="Q8I021"/>
<dbReference type="FunCoup" id="Q8I021">
    <property type="interactions" value="65"/>
</dbReference>
<dbReference type="STRING" id="9685.ENSFCAP00000004337"/>
<dbReference type="PaxDb" id="9685-ENSFCAP00000004337"/>
<dbReference type="GeneID" id="493832"/>
<dbReference type="KEGG" id="fca:493832"/>
<dbReference type="CTD" id="6361"/>
<dbReference type="eggNOG" id="ENOG502SWZ0">
    <property type="taxonomic scope" value="Eukaryota"/>
</dbReference>
<dbReference type="InParanoid" id="Q8I021"/>
<dbReference type="OrthoDB" id="9447832at2759"/>
<dbReference type="TreeFam" id="TF334888"/>
<dbReference type="Proteomes" id="UP000011712">
    <property type="component" value="Unplaced"/>
</dbReference>
<dbReference type="GO" id="GO:0005615">
    <property type="term" value="C:extracellular space"/>
    <property type="evidence" value="ECO:0007669"/>
    <property type="project" value="UniProtKB-KW"/>
</dbReference>
<dbReference type="GO" id="GO:0008009">
    <property type="term" value="F:chemokine activity"/>
    <property type="evidence" value="ECO:0007669"/>
    <property type="project" value="InterPro"/>
</dbReference>
<dbReference type="GO" id="GO:0006955">
    <property type="term" value="P:immune response"/>
    <property type="evidence" value="ECO:0007669"/>
    <property type="project" value="InterPro"/>
</dbReference>
<dbReference type="GO" id="GO:0006954">
    <property type="term" value="P:inflammatory response"/>
    <property type="evidence" value="ECO:0007669"/>
    <property type="project" value="UniProtKB-KW"/>
</dbReference>
<dbReference type="CDD" id="cd00272">
    <property type="entry name" value="Chemokine_CC"/>
    <property type="match status" value="1"/>
</dbReference>
<dbReference type="FunFam" id="2.40.50.40:FF:000012">
    <property type="entry name" value="C-C motif chemokine"/>
    <property type="match status" value="1"/>
</dbReference>
<dbReference type="Gene3D" id="2.40.50.40">
    <property type="match status" value="1"/>
</dbReference>
<dbReference type="InterPro" id="IPR039809">
    <property type="entry name" value="Chemokine_b/g/d"/>
</dbReference>
<dbReference type="InterPro" id="IPR000827">
    <property type="entry name" value="Chemokine_CC_CS"/>
</dbReference>
<dbReference type="InterPro" id="IPR001811">
    <property type="entry name" value="Chemokine_IL8-like_dom"/>
</dbReference>
<dbReference type="InterPro" id="IPR036048">
    <property type="entry name" value="Interleukin_8-like_sf"/>
</dbReference>
<dbReference type="PANTHER" id="PTHR12015:SF111">
    <property type="entry name" value="C-C MOTIF CHEMOKINE 17"/>
    <property type="match status" value="1"/>
</dbReference>
<dbReference type="PANTHER" id="PTHR12015">
    <property type="entry name" value="SMALL INDUCIBLE CYTOKINE A"/>
    <property type="match status" value="1"/>
</dbReference>
<dbReference type="Pfam" id="PF00048">
    <property type="entry name" value="IL8"/>
    <property type="match status" value="1"/>
</dbReference>
<dbReference type="SMART" id="SM00199">
    <property type="entry name" value="SCY"/>
    <property type="match status" value="1"/>
</dbReference>
<dbReference type="SUPFAM" id="SSF54117">
    <property type="entry name" value="Interleukin 8-like chemokines"/>
    <property type="match status" value="1"/>
</dbReference>
<dbReference type="PROSITE" id="PS00472">
    <property type="entry name" value="SMALL_CYTOKINES_CC"/>
    <property type="match status" value="1"/>
</dbReference>
<gene>
    <name type="primary">CCL17</name>
    <name type="synonym">TARC</name>
</gene>
<organism>
    <name type="scientific">Felis catus</name>
    <name type="common">Cat</name>
    <name type="synonym">Felis silvestris catus</name>
    <dbReference type="NCBI Taxonomy" id="9685"/>
    <lineage>
        <taxon>Eukaryota</taxon>
        <taxon>Metazoa</taxon>
        <taxon>Chordata</taxon>
        <taxon>Craniata</taxon>
        <taxon>Vertebrata</taxon>
        <taxon>Euteleostomi</taxon>
        <taxon>Mammalia</taxon>
        <taxon>Eutheria</taxon>
        <taxon>Laurasiatheria</taxon>
        <taxon>Carnivora</taxon>
        <taxon>Feliformia</taxon>
        <taxon>Felidae</taxon>
        <taxon>Felinae</taxon>
        <taxon>Felis</taxon>
    </lineage>
</organism>
<sequence length="99" mass="11056">MMSLKLLLLVMLLLGASLQVTHAARATNVGRECCLEYFKGAIPLRRLTGWYRTSGECSKDAIVFVTIHGKSICSDPKDTRVKKTVRYLQSIMNPVPQES</sequence>
<accession>Q8I021</accession>
<comment type="function">
    <text evidence="1 2">Chemokine, which displays chemotactic activity for T lymphocytes, preferentially Th2 cells, but not monocytes or granulocytes. Therefore plays an important role in a wide range of inflammatory and immunological processes. Acts by binding to CCR4 at T-cell surface. Mediates GM-CSF/CSF2-driven pain and inflammation (By similarity). In the brain, required to maintain the typical, highly branched morphology of hippocampal microglia under homeostatic conditions. May be important for the appropriate adaptation of microglial morphology and synaptic plasticity to acute lipopolysaccharide (LPS)-induced neuroinflammation. Plays a role in wound healing, mainly by inducing fibroblast migration into the wound (By similarity).</text>
</comment>
<comment type="subcellular location">
    <subcellularLocation>
        <location evidence="1">Secreted</location>
    </subcellularLocation>
</comment>
<comment type="tissue specificity">
    <text evidence="3">Expressed in thymus and also in spleen, lung, lymph node, kidney, small intestine, colon and skin.</text>
</comment>
<comment type="similarity">
    <text evidence="4">Belongs to the intercrine beta (chemokine CC) family.</text>
</comment>
<reference key="1">
    <citation type="journal article" date="2003" name="J. Vet. Med. Sci.">
        <title>Molecular cloning of the feline thymus and activation-regulated chemokine cDNA and its expression in lesional skin of cats with eosinophilic plaque.</title>
        <authorList>
            <person name="Maeda S."/>
            <person name="Okayama T."/>
            <person name="Ohmori K."/>
            <person name="Masuda K."/>
            <person name="Ohno K."/>
            <person name="Tsujimoto H."/>
        </authorList>
    </citation>
    <scope>NUCLEOTIDE SEQUENCE [MRNA]</scope>
    <scope>TISSUE SPECIFICITY</scope>
    <source>
        <tissue>Thymus</tissue>
    </source>
</reference>
<protein>
    <recommendedName>
        <fullName>C-C motif chemokine 17</fullName>
    </recommendedName>
    <alternativeName>
        <fullName>CC chemokine TARC</fullName>
    </alternativeName>
    <alternativeName>
        <fullName>Small-inducible cytokine A17</fullName>
    </alternativeName>
    <alternativeName>
        <fullName>Thymus and activation-regulated chemokine</fullName>
    </alternativeName>
</protein>
<evidence type="ECO:0000250" key="1">
    <source>
        <dbReference type="UniProtKB" id="Q92583"/>
    </source>
</evidence>
<evidence type="ECO:0000250" key="2">
    <source>
        <dbReference type="UniProtKB" id="Q9WUZ6"/>
    </source>
</evidence>
<evidence type="ECO:0000269" key="3">
    <source>
    </source>
</evidence>
<evidence type="ECO:0000305" key="4"/>
<keyword id="KW-0145">Chemotaxis</keyword>
<keyword id="KW-0202">Cytokine</keyword>
<keyword id="KW-1015">Disulfide bond</keyword>
<keyword id="KW-0395">Inflammatory response</keyword>
<keyword id="KW-1185">Reference proteome</keyword>
<keyword id="KW-0964">Secreted</keyword>
<keyword id="KW-0732">Signal</keyword>
<name>CCL17_FELCA</name>
<feature type="signal peptide" evidence="1">
    <location>
        <begin position="1"/>
        <end position="23"/>
    </location>
</feature>
<feature type="chain" id="PRO_0000227015" description="C-C motif chemokine 17">
    <location>
        <begin position="24"/>
        <end position="99"/>
    </location>
</feature>
<feature type="disulfide bond" evidence="1">
    <location>
        <begin position="33"/>
        <end position="57"/>
    </location>
</feature>
<feature type="disulfide bond" evidence="1">
    <location>
        <begin position="34"/>
        <end position="73"/>
    </location>
</feature>